<evidence type="ECO:0000250" key="1"/>
<evidence type="ECO:0000269" key="2">
    <source>
    </source>
</evidence>
<evidence type="ECO:0000269" key="3">
    <source>
    </source>
</evidence>
<evidence type="ECO:0000305" key="4"/>
<dbReference type="EC" id="5.3.1.4"/>
<dbReference type="EMBL" id="AF160811">
    <property type="protein sequence ID" value="AAD45718.1"/>
    <property type="status" value="ALT_INIT"/>
    <property type="molecule type" value="Genomic_DNA"/>
</dbReference>
<dbReference type="EMBL" id="AJ866972">
    <property type="protein sequence ID" value="CAI29261.1"/>
    <property type="molecule type" value="Genomic_DNA"/>
</dbReference>
<dbReference type="SMR" id="Q9S467"/>
<dbReference type="BRENDA" id="5.3.1.4">
    <property type="organism ID" value="623"/>
</dbReference>
<dbReference type="SABIO-RK" id="Q9S467"/>
<dbReference type="UniPathway" id="UPA00145">
    <property type="reaction ID" value="UER00565"/>
</dbReference>
<dbReference type="GO" id="GO:0005829">
    <property type="term" value="C:cytosol"/>
    <property type="evidence" value="ECO:0007669"/>
    <property type="project" value="TreeGrafter"/>
</dbReference>
<dbReference type="GO" id="GO:0008733">
    <property type="term" value="F:L-arabinose isomerase activity"/>
    <property type="evidence" value="ECO:0007669"/>
    <property type="project" value="UniProtKB-UniRule"/>
</dbReference>
<dbReference type="GO" id="GO:0030145">
    <property type="term" value="F:manganese ion binding"/>
    <property type="evidence" value="ECO:0007669"/>
    <property type="project" value="UniProtKB-UniRule"/>
</dbReference>
<dbReference type="GO" id="GO:0019569">
    <property type="term" value="P:L-arabinose catabolic process to xylulose 5-phosphate"/>
    <property type="evidence" value="ECO:0007669"/>
    <property type="project" value="UniProtKB-UniRule"/>
</dbReference>
<dbReference type="CDD" id="cd03557">
    <property type="entry name" value="L-arabinose_isomerase"/>
    <property type="match status" value="1"/>
</dbReference>
<dbReference type="Gene3D" id="3.40.50.10940">
    <property type="match status" value="1"/>
</dbReference>
<dbReference type="HAMAP" id="MF_00519">
    <property type="entry name" value="Arabinose_Isome"/>
    <property type="match status" value="1"/>
</dbReference>
<dbReference type="InterPro" id="IPR024664">
    <property type="entry name" value="Ara_Isoase_C"/>
</dbReference>
<dbReference type="InterPro" id="IPR055390">
    <property type="entry name" value="AraA_central"/>
</dbReference>
<dbReference type="InterPro" id="IPR055389">
    <property type="entry name" value="AraA_N"/>
</dbReference>
<dbReference type="InterPro" id="IPR038583">
    <property type="entry name" value="AraA_N_sf"/>
</dbReference>
<dbReference type="InterPro" id="IPR004216">
    <property type="entry name" value="Fuc/Ara_isomerase_C"/>
</dbReference>
<dbReference type="InterPro" id="IPR009015">
    <property type="entry name" value="Fucose_isomerase_N/cen_sf"/>
</dbReference>
<dbReference type="InterPro" id="IPR003762">
    <property type="entry name" value="Lara_isomerase"/>
</dbReference>
<dbReference type="NCBIfam" id="NF002795">
    <property type="entry name" value="PRK02929.1"/>
    <property type="match status" value="1"/>
</dbReference>
<dbReference type="PANTHER" id="PTHR38464">
    <property type="entry name" value="L-ARABINOSE ISOMERASE"/>
    <property type="match status" value="1"/>
</dbReference>
<dbReference type="PANTHER" id="PTHR38464:SF1">
    <property type="entry name" value="L-ARABINOSE ISOMERASE"/>
    <property type="match status" value="1"/>
</dbReference>
<dbReference type="Pfam" id="PF24856">
    <property type="entry name" value="AraA_central"/>
    <property type="match status" value="1"/>
</dbReference>
<dbReference type="Pfam" id="PF02610">
    <property type="entry name" value="AraA_N"/>
    <property type="match status" value="1"/>
</dbReference>
<dbReference type="Pfam" id="PF11762">
    <property type="entry name" value="Arabinose_Iso_C"/>
    <property type="match status" value="1"/>
</dbReference>
<dbReference type="PIRSF" id="PIRSF001478">
    <property type="entry name" value="L-ara_isomerase"/>
    <property type="match status" value="1"/>
</dbReference>
<dbReference type="SUPFAM" id="SSF50443">
    <property type="entry name" value="FucI/AraA C-terminal domain-like"/>
    <property type="match status" value="1"/>
</dbReference>
<dbReference type="SUPFAM" id="SSF53743">
    <property type="entry name" value="FucI/AraA N-terminal and middle domains"/>
    <property type="match status" value="1"/>
</dbReference>
<proteinExistence type="evidence at protein level"/>
<reference key="1">
    <citation type="submission" date="1999-06" db="EMBL/GenBank/DDBJ databases">
        <title>The L-arabinose utilization gene cluster from Bacillus stearothermophilus T-6.</title>
        <authorList>
            <person name="Gilead-Gropper S."/>
            <person name="Shoham Y."/>
        </authorList>
    </citation>
    <scope>NUCLEOTIDE SEQUENCE [GENOMIC DNA]</scope>
    <source>
        <strain>T-6</strain>
    </source>
</reference>
<reference key="2">
    <citation type="journal article" date="2006" name="Biochim. Biophys. Acta">
        <title>Cloning, purification and biochemical characterization of metallic-ions independent and thermoactive L-arabinose isomerase from the Bacillus stearothermophilus US100 strain.</title>
        <authorList>
            <person name="Rhimi M."/>
            <person name="Bejar S."/>
        </authorList>
    </citation>
    <scope>NUCLEOTIDE SEQUENCE [GENOMIC DNA]</scope>
    <scope>FUNCTION</scope>
    <scope>SUBUNIT</scope>
    <scope>ACTIVITY REGULATION</scope>
    <scope>BIOPHYSICOCHEMICAL PROPERTIES</scope>
    <source>
        <strain>US100</strain>
    </source>
</reference>
<reference key="3">
    <citation type="journal article" date="2007" name="J. Bacteriol.">
        <title>Probing the essential catalytic residues and substrate affinity in the thermoactive Bacillus stearothermophilus US100 L-arabinose isomerase by site-directed mutagenesis.</title>
        <authorList>
            <person name="Rhimi M."/>
            <person name="Juy M."/>
            <person name="Aghajari N."/>
            <person name="Haser R."/>
            <person name="Bejar S."/>
        </authorList>
    </citation>
    <scope>COFACTOR</scope>
    <scope>BIOPHYSICOCHEMICAL PROPERTIES</scope>
    <scope>IDENTIFICATION BY MASS SPECTROMETRY</scope>
    <scope>MUTAGENESIS OF PHE-279; GLU-306; GLU-331; HIS-348 AND HIS-447</scope>
    <source>
        <strain>US100</strain>
    </source>
</reference>
<keyword id="KW-0054">Arabinose catabolism</keyword>
<keyword id="KW-0119">Carbohydrate metabolism</keyword>
<keyword id="KW-0413">Isomerase</keyword>
<keyword id="KW-0464">Manganese</keyword>
<keyword id="KW-0479">Metal-binding</keyword>
<organism>
    <name type="scientific">Geobacillus stearothermophilus</name>
    <name type="common">Bacillus stearothermophilus</name>
    <dbReference type="NCBI Taxonomy" id="1422"/>
    <lineage>
        <taxon>Bacteria</taxon>
        <taxon>Bacillati</taxon>
        <taxon>Bacillota</taxon>
        <taxon>Bacilli</taxon>
        <taxon>Bacillales</taxon>
        <taxon>Anoxybacillaceae</taxon>
        <taxon>Geobacillus</taxon>
    </lineage>
</organism>
<protein>
    <recommendedName>
        <fullName>L-arabinose isomerase</fullName>
        <ecNumber>5.3.1.4</ecNumber>
    </recommendedName>
</protein>
<name>ARAA_GEOSE</name>
<sequence>MLSLRPYEFWFVTGSQHLYGEEALKQVEEHSMMIVNELNQDSVFPFPLVFKSVVTTPEEIRRVCLEANASEQCAGVITWMHTFSPAKMWIGGLLELRKPLLHLHTQFNRDIPWDSIDMDFMNLNQSAHGDREYGFIGARMGVARKVVVGHWEDPEVRERLAKWMRTAVAFAESRNLKVARFGDNMREVAVTEGDKVGAQIQFGWSVNGYGIGDLVQYIRDVSEQKVNELLDEYEELYDIVPAGRQEGPVRESIREQARIELGLKAFLQDGNFTAFTTTFEDLHGMKQLPGLAVQRLMAEGYGFGGEGDWKTAALVRLMKVMADGKGTSFMEDYTYHLEPGNEMILGAHMLEVCPTIAATRPRIEVHPLSIGGKEDPARLVFDGGEGAAVNASLIDLGHRFRLIVNEVDAVKPEHDMPKLPVARILWKPRPSLRDSAEAWILAGGAHHTCFSFAVTTEQLQDFAEMAGIECVVINEHTSVSSFKNELKWNEVFWRGR</sequence>
<comment type="function">
    <text evidence="2">Catalyzes the conversion of L-arabinose to L-ribulose. In vitro, converts D-galactose into D-tagatose.</text>
</comment>
<comment type="catalytic activity">
    <reaction>
        <text>beta-L-arabinopyranose = L-ribulose</text>
        <dbReference type="Rhea" id="RHEA:14821"/>
        <dbReference type="ChEBI" id="CHEBI:16880"/>
        <dbReference type="ChEBI" id="CHEBI:40886"/>
        <dbReference type="EC" id="5.3.1.4"/>
    </reaction>
</comment>
<comment type="cofactor">
    <cofactor evidence="3">
        <name>Mn(2+)</name>
        <dbReference type="ChEBI" id="CHEBI:29035"/>
    </cofactor>
    <text evidence="3">Binds 1 Mn(2+) ion per subunit.</text>
</comment>
<comment type="activity regulation">
    <text evidence="2">Inhibited by copper.</text>
</comment>
<comment type="biophysicochemical properties">
    <kinetics>
        <KM evidence="2 3">28 mM for L-arabinose</KM>
        <KM evidence="2 3">57 mM for D-galactose</KM>
        <Vmax evidence="2 3">41.8 umol/min/mg enzyme with L-arabinose as substrate</Vmax>
        <Vmax evidence="2 3">8.9 umol/min/mg enzyme with D-galactose as substrate</Vmax>
    </kinetics>
    <phDependence>
        <text evidence="2 3">Optimum pH is 7.5-8.0.</text>
    </phDependence>
    <temperatureDependence>
        <text evidence="2 3">Optimum temperature is 80 degrees Celsius.</text>
    </temperatureDependence>
</comment>
<comment type="pathway">
    <text>Carbohydrate degradation; L-arabinose degradation via L-ribulose; D-xylulose 5-phosphate from L-arabinose (bacterial route): step 1/3.</text>
</comment>
<comment type="subunit">
    <text evidence="2">Homotetramer.</text>
</comment>
<comment type="similarity">
    <text evidence="4">Belongs to the arabinose isomerase family.</text>
</comment>
<comment type="sequence caution" evidence="4">
    <conflict type="erroneous initiation">
        <sequence resource="EMBL-CDS" id="AAD45718"/>
    </conflict>
</comment>
<accession>Q9S467</accession>
<accession>Q335M1</accession>
<feature type="chain" id="PRO_0000198381" description="L-arabinose isomerase">
    <location>
        <begin position="1"/>
        <end position="496"/>
    </location>
</feature>
<feature type="binding site" evidence="1">
    <location>
        <position position="306"/>
    </location>
    <ligand>
        <name>Mn(2+)</name>
        <dbReference type="ChEBI" id="CHEBI:29035"/>
    </ligand>
</feature>
<feature type="binding site" evidence="1">
    <location>
        <position position="331"/>
    </location>
    <ligand>
        <name>Mn(2+)</name>
        <dbReference type="ChEBI" id="CHEBI:29035"/>
    </ligand>
</feature>
<feature type="binding site" evidence="1">
    <location>
        <position position="348"/>
    </location>
    <ligand>
        <name>Mn(2+)</name>
        <dbReference type="ChEBI" id="CHEBI:29035"/>
    </ligand>
</feature>
<feature type="binding site" evidence="1">
    <location>
        <position position="447"/>
    </location>
    <ligand>
        <name>Mn(2+)</name>
        <dbReference type="ChEBI" id="CHEBI:29035"/>
    </ligand>
</feature>
<feature type="mutagenesis site" description="Increases KM for L-arabinose." evidence="3">
    <original>F</original>
    <variation>Q</variation>
    <location>
        <position position="279"/>
    </location>
</feature>
<feature type="mutagenesis site" description="Loss of activity." evidence="3">
    <original>E</original>
    <variation>A</variation>
    <location>
        <position position="306"/>
    </location>
</feature>
<feature type="mutagenesis site" description="Loss of activity." evidence="3">
    <original>E</original>
    <variation>A</variation>
    <location>
        <position position="331"/>
    </location>
</feature>
<feature type="mutagenesis site" description="Loss of activity." evidence="3">
    <original>H</original>
    <variation>A</variation>
    <location>
        <position position="348"/>
    </location>
</feature>
<feature type="mutagenesis site" description="Loss of activity." evidence="3">
    <original>H</original>
    <variation>A</variation>
    <location>
        <position position="447"/>
    </location>
</feature>
<feature type="sequence conflict" description="In Ref. 2; CAI29261." evidence="4" ref="2">
    <original>MMI</original>
    <variation>RIM</variation>
    <location>
        <begin position="32"/>
        <end position="34"/>
    </location>
</feature>
<feature type="sequence conflict" description="In Ref. 2; CAI29261." evidence="4" ref="2">
    <original>LNQ</original>
    <variation>WNR</variation>
    <location>
        <begin position="38"/>
        <end position="40"/>
    </location>
</feature>
<feature type="sequence conflict" description="In Ref. 2; CAI29261." evidence="4" ref="2">
    <original>L</original>
    <variation>F</variation>
    <location>
        <position position="48"/>
    </location>
</feature>
<feature type="sequence conflict" description="In Ref. 2; CAI29261." evidence="4" ref="2">
    <original>LEP</original>
    <variation>FEL</variation>
    <location>
        <begin position="337"/>
        <end position="339"/>
    </location>
</feature>
<feature type="sequence conflict" description="In Ref. 2; CAI29261." evidence="4" ref="2">
    <original>M</original>
    <variation>L</variation>
    <location>
        <position position="343"/>
    </location>
</feature>
<feature type="sequence conflict" description="In Ref. 2; CAI29261." evidence="4" ref="2">
    <original>D</original>
    <variation>E</variation>
    <location>
        <position position="415"/>
    </location>
</feature>
<feature type="sequence conflict" description="In Ref. 2; CAI29261." evidence="4" ref="2">
    <original>T</original>
    <variation>A</variation>
    <location>
        <position position="456"/>
    </location>
</feature>
<feature type="sequence conflict" description="In Ref. 2; CAI29261." evidence="4" ref="2">
    <original>K</original>
    <variation>R</variation>
    <location>
        <position position="487"/>
    </location>
</feature>
<gene>
    <name type="primary">araA</name>
</gene>